<sequence length="299" mass="33172">MFRGSIPPLPTPFRRGRLDEEALRRLVERVVQGGSHGVSVGGTTGEPGTQTLEERKRAIEVVLDQVAGRVPVIPGTGALRLEETLELTRFAKEAGAQGAMVIVPYYVKPNQEGLYRYFAEVARAVPDFPLLIYNIPGRAGVEIAPKTVGRLRRDFPNIVGLKHSSKDLEYLSHLFLEAGRDFLVFCGLESLTLPMMSLGAVGTIAATANWLPKEVALLCEKALAGDYQGARELHFYLLEANEAIFWDTNPIPLKTVLSWMGLLEKEWRPPLGPTTPEVEERLRRMAERYGLLPKEKEAA</sequence>
<protein>
    <recommendedName>
        <fullName evidence="1">4-hydroxy-tetrahydrodipicolinate synthase</fullName>
        <shortName evidence="1">HTPA synthase</shortName>
        <ecNumber evidence="1">4.3.3.7</ecNumber>
    </recommendedName>
</protein>
<name>DAPA_THET2</name>
<keyword id="KW-0028">Amino-acid biosynthesis</keyword>
<keyword id="KW-0963">Cytoplasm</keyword>
<keyword id="KW-0220">Diaminopimelate biosynthesis</keyword>
<keyword id="KW-0456">Lyase</keyword>
<keyword id="KW-0457">Lysine biosynthesis</keyword>
<keyword id="KW-0704">Schiff base</keyword>
<evidence type="ECO:0000255" key="1">
    <source>
        <dbReference type="HAMAP-Rule" id="MF_00418"/>
    </source>
</evidence>
<evidence type="ECO:0000305" key="2"/>
<gene>
    <name evidence="1" type="primary">dapA</name>
    <name type="ordered locus">TT_C0591</name>
</gene>
<accession>Q72K27</accession>
<feature type="chain" id="PRO_0000103176" description="4-hydroxy-tetrahydrodipicolinate synthase">
    <location>
        <begin position="1"/>
        <end position="299"/>
    </location>
</feature>
<feature type="active site" description="Proton donor/acceptor" evidence="1">
    <location>
        <position position="133"/>
    </location>
</feature>
<feature type="active site" description="Schiff-base intermediate with substrate" evidence="1">
    <location>
        <position position="162"/>
    </location>
</feature>
<feature type="binding site" evidence="1">
    <location>
        <position position="44"/>
    </location>
    <ligand>
        <name>pyruvate</name>
        <dbReference type="ChEBI" id="CHEBI:15361"/>
    </ligand>
</feature>
<feature type="binding site" evidence="1">
    <location>
        <position position="204"/>
    </location>
    <ligand>
        <name>pyruvate</name>
        <dbReference type="ChEBI" id="CHEBI:15361"/>
    </ligand>
</feature>
<feature type="site" description="Part of a proton relay during catalysis" evidence="1">
    <location>
        <position position="43"/>
    </location>
</feature>
<feature type="site" description="Part of a proton relay during catalysis" evidence="1">
    <location>
        <position position="106"/>
    </location>
</feature>
<dbReference type="EC" id="4.3.3.7" evidence="1"/>
<dbReference type="EMBL" id="AE017221">
    <property type="protein sequence ID" value="AAS80939.1"/>
    <property type="molecule type" value="Genomic_DNA"/>
</dbReference>
<dbReference type="RefSeq" id="WP_011173036.1">
    <property type="nucleotide sequence ID" value="NC_005835.1"/>
</dbReference>
<dbReference type="SMR" id="Q72K27"/>
<dbReference type="KEGG" id="tth:TT_C0591"/>
<dbReference type="eggNOG" id="COG0329">
    <property type="taxonomic scope" value="Bacteria"/>
</dbReference>
<dbReference type="HOGENOM" id="CLU_049343_5_1_0"/>
<dbReference type="OrthoDB" id="9782828at2"/>
<dbReference type="UniPathway" id="UPA00034">
    <property type="reaction ID" value="UER00017"/>
</dbReference>
<dbReference type="Proteomes" id="UP000000592">
    <property type="component" value="Chromosome"/>
</dbReference>
<dbReference type="GO" id="GO:0005737">
    <property type="term" value="C:cytoplasm"/>
    <property type="evidence" value="ECO:0007669"/>
    <property type="project" value="UniProtKB-SubCell"/>
</dbReference>
<dbReference type="GO" id="GO:0008840">
    <property type="term" value="F:4-hydroxy-tetrahydrodipicolinate synthase activity"/>
    <property type="evidence" value="ECO:0007669"/>
    <property type="project" value="UniProtKB-UniRule"/>
</dbReference>
<dbReference type="GO" id="GO:0019877">
    <property type="term" value="P:diaminopimelate biosynthetic process"/>
    <property type="evidence" value="ECO:0007669"/>
    <property type="project" value="UniProtKB-UniRule"/>
</dbReference>
<dbReference type="GO" id="GO:0009089">
    <property type="term" value="P:lysine biosynthetic process via diaminopimelate"/>
    <property type="evidence" value="ECO:0007669"/>
    <property type="project" value="UniProtKB-UniRule"/>
</dbReference>
<dbReference type="CDD" id="cd00950">
    <property type="entry name" value="DHDPS"/>
    <property type="match status" value="1"/>
</dbReference>
<dbReference type="Gene3D" id="3.20.20.70">
    <property type="entry name" value="Aldolase class I"/>
    <property type="match status" value="1"/>
</dbReference>
<dbReference type="HAMAP" id="MF_00418">
    <property type="entry name" value="DapA"/>
    <property type="match status" value="1"/>
</dbReference>
<dbReference type="InterPro" id="IPR013785">
    <property type="entry name" value="Aldolase_TIM"/>
</dbReference>
<dbReference type="InterPro" id="IPR005263">
    <property type="entry name" value="DapA"/>
</dbReference>
<dbReference type="InterPro" id="IPR002220">
    <property type="entry name" value="DapA-like"/>
</dbReference>
<dbReference type="InterPro" id="IPR012691">
    <property type="entry name" value="HpaI_NOT_DapA"/>
</dbReference>
<dbReference type="InterPro" id="IPR020625">
    <property type="entry name" value="Schiff_base-form_aldolases_AS"/>
</dbReference>
<dbReference type="NCBIfam" id="TIGR00674">
    <property type="entry name" value="dapA"/>
    <property type="match status" value="1"/>
</dbReference>
<dbReference type="NCBIfam" id="TIGR02313">
    <property type="entry name" value="HpaI-NOT-DapA"/>
    <property type="match status" value="1"/>
</dbReference>
<dbReference type="PANTHER" id="PTHR12128:SF66">
    <property type="entry name" value="4-HYDROXY-2-OXOGLUTARATE ALDOLASE, MITOCHONDRIAL"/>
    <property type="match status" value="1"/>
</dbReference>
<dbReference type="PANTHER" id="PTHR12128">
    <property type="entry name" value="DIHYDRODIPICOLINATE SYNTHASE"/>
    <property type="match status" value="1"/>
</dbReference>
<dbReference type="Pfam" id="PF00701">
    <property type="entry name" value="DHDPS"/>
    <property type="match status" value="1"/>
</dbReference>
<dbReference type="PIRSF" id="PIRSF001365">
    <property type="entry name" value="DHDPS"/>
    <property type="match status" value="1"/>
</dbReference>
<dbReference type="PRINTS" id="PR00146">
    <property type="entry name" value="DHPICSNTHASE"/>
</dbReference>
<dbReference type="SMART" id="SM01130">
    <property type="entry name" value="DHDPS"/>
    <property type="match status" value="1"/>
</dbReference>
<dbReference type="SUPFAM" id="SSF51569">
    <property type="entry name" value="Aldolase"/>
    <property type="match status" value="1"/>
</dbReference>
<dbReference type="PROSITE" id="PS00666">
    <property type="entry name" value="DHDPS_2"/>
    <property type="match status" value="1"/>
</dbReference>
<reference key="1">
    <citation type="journal article" date="2004" name="Nat. Biotechnol.">
        <title>The genome sequence of the extreme thermophile Thermus thermophilus.</title>
        <authorList>
            <person name="Henne A."/>
            <person name="Brueggemann H."/>
            <person name="Raasch C."/>
            <person name="Wiezer A."/>
            <person name="Hartsch T."/>
            <person name="Liesegang H."/>
            <person name="Johann A."/>
            <person name="Lienard T."/>
            <person name="Gohl O."/>
            <person name="Martinez-Arias R."/>
            <person name="Jacobi C."/>
            <person name="Starkuviene V."/>
            <person name="Schlenczeck S."/>
            <person name="Dencker S."/>
            <person name="Huber R."/>
            <person name="Klenk H.-P."/>
            <person name="Kramer W."/>
            <person name="Merkl R."/>
            <person name="Gottschalk G."/>
            <person name="Fritz H.-J."/>
        </authorList>
    </citation>
    <scope>NUCLEOTIDE SEQUENCE [LARGE SCALE GENOMIC DNA]</scope>
    <source>
        <strain>ATCC BAA-163 / DSM 7039 / HB27</strain>
    </source>
</reference>
<organism>
    <name type="scientific">Thermus thermophilus (strain ATCC BAA-163 / DSM 7039 / HB27)</name>
    <dbReference type="NCBI Taxonomy" id="262724"/>
    <lineage>
        <taxon>Bacteria</taxon>
        <taxon>Thermotogati</taxon>
        <taxon>Deinococcota</taxon>
        <taxon>Deinococci</taxon>
        <taxon>Thermales</taxon>
        <taxon>Thermaceae</taxon>
        <taxon>Thermus</taxon>
    </lineage>
</organism>
<proteinExistence type="inferred from homology"/>
<comment type="function">
    <text evidence="1">Catalyzes the condensation of (S)-aspartate-beta-semialdehyde [(S)-ASA] and pyruvate to 4-hydroxy-tetrahydrodipicolinate (HTPA).</text>
</comment>
<comment type="catalytic activity">
    <reaction evidence="1">
        <text>L-aspartate 4-semialdehyde + pyruvate = (2S,4S)-4-hydroxy-2,3,4,5-tetrahydrodipicolinate + H2O + H(+)</text>
        <dbReference type="Rhea" id="RHEA:34171"/>
        <dbReference type="ChEBI" id="CHEBI:15361"/>
        <dbReference type="ChEBI" id="CHEBI:15377"/>
        <dbReference type="ChEBI" id="CHEBI:15378"/>
        <dbReference type="ChEBI" id="CHEBI:67139"/>
        <dbReference type="ChEBI" id="CHEBI:537519"/>
        <dbReference type="EC" id="4.3.3.7"/>
    </reaction>
</comment>
<comment type="pathway">
    <text evidence="1">Amino-acid biosynthesis; L-lysine biosynthesis via DAP pathway; (S)-tetrahydrodipicolinate from L-aspartate: step 3/4.</text>
</comment>
<comment type="subunit">
    <text evidence="1">Homotetramer; dimer of dimers.</text>
</comment>
<comment type="subcellular location">
    <subcellularLocation>
        <location evidence="1">Cytoplasm</location>
    </subcellularLocation>
</comment>
<comment type="similarity">
    <text evidence="1">Belongs to the DapA family.</text>
</comment>
<comment type="caution">
    <text evidence="2">Was originally thought to be a dihydrodipicolinate synthase (DHDPS), catalyzing the condensation of (S)-aspartate-beta-semialdehyde [(S)-ASA] and pyruvate to dihydrodipicolinate (DHDP). However, it was shown in E.coli that the product of the enzymatic reaction is not dihydrodipicolinate but in fact (4S)-4-hydroxy-2,3,4,5-tetrahydro-(2S)-dipicolinic acid (HTPA), and that the consecutive dehydration reaction leading to DHDP is not spontaneous but catalyzed by DapB.</text>
</comment>